<reference key="1">
    <citation type="journal article" date="2000" name="Nature">
        <title>DNA sequence of both chromosomes of the cholera pathogen Vibrio cholerae.</title>
        <authorList>
            <person name="Heidelberg J.F."/>
            <person name="Eisen J.A."/>
            <person name="Nelson W.C."/>
            <person name="Clayton R.A."/>
            <person name="Gwinn M.L."/>
            <person name="Dodson R.J."/>
            <person name="Haft D.H."/>
            <person name="Hickey E.K."/>
            <person name="Peterson J.D."/>
            <person name="Umayam L.A."/>
            <person name="Gill S.R."/>
            <person name="Nelson K.E."/>
            <person name="Read T.D."/>
            <person name="Tettelin H."/>
            <person name="Richardson D.L."/>
            <person name="Ermolaeva M.D."/>
            <person name="Vamathevan J.J."/>
            <person name="Bass S."/>
            <person name="Qin H."/>
            <person name="Dragoi I."/>
            <person name="Sellers P."/>
            <person name="McDonald L.A."/>
            <person name="Utterback T.R."/>
            <person name="Fleischmann R.D."/>
            <person name="Nierman W.C."/>
            <person name="White O."/>
            <person name="Salzberg S.L."/>
            <person name="Smith H.O."/>
            <person name="Colwell R.R."/>
            <person name="Mekalanos J.J."/>
            <person name="Venter J.C."/>
            <person name="Fraser C.M."/>
        </authorList>
    </citation>
    <scope>NUCLEOTIDE SEQUENCE [LARGE SCALE GENOMIC DNA]</scope>
    <source>
        <strain>ATCC 39315 / El Tor Inaba N16961</strain>
    </source>
</reference>
<feature type="chain" id="PRO_0000095704" description="N-acetylmannosamine kinase">
    <location>
        <begin position="1"/>
        <end position="287"/>
    </location>
</feature>
<feature type="binding site" evidence="1">
    <location>
        <begin position="5"/>
        <end position="12"/>
    </location>
    <ligand>
        <name>ATP</name>
        <dbReference type="ChEBI" id="CHEBI:30616"/>
    </ligand>
</feature>
<feature type="binding site" evidence="1">
    <location>
        <begin position="131"/>
        <end position="138"/>
    </location>
    <ligand>
        <name>ATP</name>
        <dbReference type="ChEBI" id="CHEBI:30616"/>
    </ligand>
</feature>
<feature type="binding site" evidence="1">
    <location>
        <position position="155"/>
    </location>
    <ligand>
        <name>Zn(2+)</name>
        <dbReference type="ChEBI" id="CHEBI:29105"/>
    </ligand>
</feature>
<feature type="binding site" evidence="1">
    <location>
        <position position="165"/>
    </location>
    <ligand>
        <name>Zn(2+)</name>
        <dbReference type="ChEBI" id="CHEBI:29105"/>
    </ligand>
</feature>
<feature type="binding site" evidence="1">
    <location>
        <position position="167"/>
    </location>
    <ligand>
        <name>Zn(2+)</name>
        <dbReference type="ChEBI" id="CHEBI:29105"/>
    </ligand>
</feature>
<feature type="binding site" evidence="1">
    <location>
        <position position="172"/>
    </location>
    <ligand>
        <name>Zn(2+)</name>
        <dbReference type="ChEBI" id="CHEBI:29105"/>
    </ligand>
</feature>
<protein>
    <recommendedName>
        <fullName evidence="1">N-acetylmannosamine kinase</fullName>
        <ecNumber evidence="1">2.7.1.60</ecNumber>
    </recommendedName>
    <alternativeName>
        <fullName evidence="1">ManNAc kinase</fullName>
    </alternativeName>
    <alternativeName>
        <fullName evidence="1">N-acetyl-D-mannosamine kinase</fullName>
    </alternativeName>
</protein>
<evidence type="ECO:0000255" key="1">
    <source>
        <dbReference type="HAMAP-Rule" id="MF_01234"/>
    </source>
</evidence>
<accession>Q9KR61</accession>
<proteinExistence type="inferred from homology"/>
<name>NANK_VIBCH</name>
<comment type="function">
    <text evidence="1">Catalyzes the phosphorylation of N-acetylmannosamine (ManNAc) to ManNAc-6-P.</text>
</comment>
<comment type="catalytic activity">
    <reaction evidence="1">
        <text>an N-acyl-D-mannosamine + ATP = an N-acyl-D-mannosamine 6-phosphate + ADP + H(+)</text>
        <dbReference type="Rhea" id="RHEA:23832"/>
        <dbReference type="ChEBI" id="CHEBI:15378"/>
        <dbReference type="ChEBI" id="CHEBI:16062"/>
        <dbReference type="ChEBI" id="CHEBI:30616"/>
        <dbReference type="ChEBI" id="CHEBI:57666"/>
        <dbReference type="ChEBI" id="CHEBI:456216"/>
        <dbReference type="EC" id="2.7.1.60"/>
    </reaction>
</comment>
<comment type="pathway">
    <text evidence="1">Amino-sugar metabolism; N-acetylneuraminate degradation; D-fructose 6-phosphate from N-acetylneuraminate: step 2/5.</text>
</comment>
<comment type="subunit">
    <text evidence="1">Homodimer.</text>
</comment>
<comment type="similarity">
    <text evidence="1">Belongs to the ROK (NagC/XylR) family. NanK subfamily.</text>
</comment>
<organism>
    <name type="scientific">Vibrio cholerae serotype O1 (strain ATCC 39315 / El Tor Inaba N16961)</name>
    <dbReference type="NCBI Taxonomy" id="243277"/>
    <lineage>
        <taxon>Bacteria</taxon>
        <taxon>Pseudomonadati</taxon>
        <taxon>Pseudomonadota</taxon>
        <taxon>Gammaproteobacteria</taxon>
        <taxon>Vibrionales</taxon>
        <taxon>Vibrionaceae</taxon>
        <taxon>Vibrio</taxon>
    </lineage>
</organism>
<keyword id="KW-0067">ATP-binding</keyword>
<keyword id="KW-0119">Carbohydrate metabolism</keyword>
<keyword id="KW-0418">Kinase</keyword>
<keyword id="KW-0479">Metal-binding</keyword>
<keyword id="KW-0547">Nucleotide-binding</keyword>
<keyword id="KW-1185">Reference proteome</keyword>
<keyword id="KW-0808">Transferase</keyword>
<keyword id="KW-0862">Zinc</keyword>
<gene>
    <name evidence="1" type="primary">nanK</name>
    <name type="ordered locus">VC_1782</name>
</gene>
<dbReference type="EC" id="2.7.1.60" evidence="1"/>
<dbReference type="EMBL" id="AE003852">
    <property type="protein sequence ID" value="AAF94931.1"/>
    <property type="molecule type" value="Genomic_DNA"/>
</dbReference>
<dbReference type="PIR" id="C82158">
    <property type="entry name" value="C82158"/>
</dbReference>
<dbReference type="RefSeq" id="NP_231417.1">
    <property type="nucleotide sequence ID" value="NC_002505.1"/>
</dbReference>
<dbReference type="RefSeq" id="WP_001259414.1">
    <property type="nucleotide sequence ID" value="NZ_LT906614.1"/>
</dbReference>
<dbReference type="SMR" id="Q9KR61"/>
<dbReference type="STRING" id="243277.VC_1782"/>
<dbReference type="DNASU" id="2613662"/>
<dbReference type="EnsemblBacteria" id="AAF94931">
    <property type="protein sequence ID" value="AAF94931"/>
    <property type="gene ID" value="VC_1782"/>
</dbReference>
<dbReference type="KEGG" id="vch:VC_1782"/>
<dbReference type="PATRIC" id="fig|243277.26.peg.1701"/>
<dbReference type="eggNOG" id="COG1940">
    <property type="taxonomic scope" value="Bacteria"/>
</dbReference>
<dbReference type="HOGENOM" id="CLU_036604_0_4_6"/>
<dbReference type="UniPathway" id="UPA00629">
    <property type="reaction ID" value="UER00681"/>
</dbReference>
<dbReference type="Proteomes" id="UP000000584">
    <property type="component" value="Chromosome 1"/>
</dbReference>
<dbReference type="GO" id="GO:0005524">
    <property type="term" value="F:ATP binding"/>
    <property type="evidence" value="ECO:0007669"/>
    <property type="project" value="UniProtKB-UniRule"/>
</dbReference>
<dbReference type="GO" id="GO:0009384">
    <property type="term" value="F:N-acylmannosamine kinase activity"/>
    <property type="evidence" value="ECO:0000318"/>
    <property type="project" value="GO_Central"/>
</dbReference>
<dbReference type="GO" id="GO:0008270">
    <property type="term" value="F:zinc ion binding"/>
    <property type="evidence" value="ECO:0007669"/>
    <property type="project" value="UniProtKB-UniRule"/>
</dbReference>
<dbReference type="GO" id="GO:0019262">
    <property type="term" value="P:N-acetylneuraminate catabolic process"/>
    <property type="evidence" value="ECO:0000318"/>
    <property type="project" value="GO_Central"/>
</dbReference>
<dbReference type="Gene3D" id="3.30.420.40">
    <property type="match status" value="2"/>
</dbReference>
<dbReference type="HAMAP" id="MF_01234">
    <property type="entry name" value="ManNAc_kinase"/>
    <property type="match status" value="1"/>
</dbReference>
<dbReference type="InterPro" id="IPR043129">
    <property type="entry name" value="ATPase_NBD"/>
</dbReference>
<dbReference type="InterPro" id="IPR023945">
    <property type="entry name" value="ManNAc_kinase_bac"/>
</dbReference>
<dbReference type="InterPro" id="IPR000600">
    <property type="entry name" value="ROK"/>
</dbReference>
<dbReference type="InterPro" id="IPR049874">
    <property type="entry name" value="ROK_cs"/>
</dbReference>
<dbReference type="NCBIfam" id="NF003461">
    <property type="entry name" value="PRK05082.1"/>
    <property type="match status" value="1"/>
</dbReference>
<dbReference type="PANTHER" id="PTHR18964:SF169">
    <property type="entry name" value="N-ACETYLMANNOSAMINE KINASE"/>
    <property type="match status" value="1"/>
</dbReference>
<dbReference type="PANTHER" id="PTHR18964">
    <property type="entry name" value="ROK (REPRESSOR, ORF, KINASE) FAMILY"/>
    <property type="match status" value="1"/>
</dbReference>
<dbReference type="Pfam" id="PF00480">
    <property type="entry name" value="ROK"/>
    <property type="match status" value="1"/>
</dbReference>
<dbReference type="SUPFAM" id="SSF53067">
    <property type="entry name" value="Actin-like ATPase domain"/>
    <property type="match status" value="1"/>
</dbReference>
<dbReference type="PROSITE" id="PS01125">
    <property type="entry name" value="ROK"/>
    <property type="match status" value="1"/>
</dbReference>
<sequence>MRTLAIDIGGTKIALAIVEEGTIIQRYQIATPVVQDVTKFVQAILEKVTEWLPSIDYVGVSTTGYVTPEGITSINPETLNFPVPFPLAQTLEQLTNKPVSILNDAQAAAWFEFVQLKNPSLNMAFITVSTGVGGGIIIDGKLHKGNSGLAGHIGHMSVAIEGPLCGCGQRGCVESMASGNAIQKESEATFTETMSNVELFKQAAFNPKAEAIINRSVQAVATLCCNLKACLDLDIIVLGGGIGLAEGYLERLNKAIQSRPSVFHIPVTPAHGDYDACLLGAAFQFKE</sequence>